<gene>
    <name evidence="1" type="primary">rpoZ</name>
    <name type="ordered locus">VF_0105</name>
</gene>
<reference key="1">
    <citation type="journal article" date="2005" name="Proc. Natl. Acad. Sci. U.S.A.">
        <title>Complete genome sequence of Vibrio fischeri: a symbiotic bacterium with pathogenic congeners.</title>
        <authorList>
            <person name="Ruby E.G."/>
            <person name="Urbanowski M."/>
            <person name="Campbell J."/>
            <person name="Dunn A."/>
            <person name="Faini M."/>
            <person name="Gunsalus R."/>
            <person name="Lostroh P."/>
            <person name="Lupp C."/>
            <person name="McCann J."/>
            <person name="Millikan D."/>
            <person name="Schaefer A."/>
            <person name="Stabb E."/>
            <person name="Stevens A."/>
            <person name="Visick K."/>
            <person name="Whistler C."/>
            <person name="Greenberg E.P."/>
        </authorList>
    </citation>
    <scope>NUCLEOTIDE SEQUENCE [LARGE SCALE GENOMIC DNA]</scope>
    <source>
        <strain>ATCC 700601 / ES114</strain>
    </source>
</reference>
<proteinExistence type="inferred from homology"/>
<accession>Q5E8P6</accession>
<keyword id="KW-0240">DNA-directed RNA polymerase</keyword>
<keyword id="KW-0548">Nucleotidyltransferase</keyword>
<keyword id="KW-1185">Reference proteome</keyword>
<keyword id="KW-0804">Transcription</keyword>
<keyword id="KW-0808">Transferase</keyword>
<organism>
    <name type="scientific">Aliivibrio fischeri (strain ATCC 700601 / ES114)</name>
    <name type="common">Vibrio fischeri</name>
    <dbReference type="NCBI Taxonomy" id="312309"/>
    <lineage>
        <taxon>Bacteria</taxon>
        <taxon>Pseudomonadati</taxon>
        <taxon>Pseudomonadota</taxon>
        <taxon>Gammaproteobacteria</taxon>
        <taxon>Vibrionales</taxon>
        <taxon>Vibrionaceae</taxon>
        <taxon>Aliivibrio</taxon>
    </lineage>
</organism>
<evidence type="ECO:0000255" key="1">
    <source>
        <dbReference type="HAMAP-Rule" id="MF_00366"/>
    </source>
</evidence>
<evidence type="ECO:0000256" key="2">
    <source>
        <dbReference type="SAM" id="MobiDB-lite"/>
    </source>
</evidence>
<protein>
    <recommendedName>
        <fullName evidence="1">DNA-directed RNA polymerase subunit omega</fullName>
        <shortName evidence="1">RNAP omega subunit</shortName>
        <ecNumber evidence="1">2.7.7.6</ecNumber>
    </recommendedName>
    <alternativeName>
        <fullName evidence="1">RNA polymerase omega subunit</fullName>
    </alternativeName>
    <alternativeName>
        <fullName evidence="1">Transcriptase subunit omega</fullName>
    </alternativeName>
</protein>
<comment type="function">
    <text evidence="1">Promotes RNA polymerase assembly. Latches the N- and C-terminal regions of the beta' subunit thereby facilitating its interaction with the beta and alpha subunits.</text>
</comment>
<comment type="catalytic activity">
    <reaction evidence="1">
        <text>RNA(n) + a ribonucleoside 5'-triphosphate = RNA(n+1) + diphosphate</text>
        <dbReference type="Rhea" id="RHEA:21248"/>
        <dbReference type="Rhea" id="RHEA-COMP:14527"/>
        <dbReference type="Rhea" id="RHEA-COMP:17342"/>
        <dbReference type="ChEBI" id="CHEBI:33019"/>
        <dbReference type="ChEBI" id="CHEBI:61557"/>
        <dbReference type="ChEBI" id="CHEBI:140395"/>
        <dbReference type="EC" id="2.7.7.6"/>
    </reaction>
</comment>
<comment type="subunit">
    <text evidence="1">The RNAP catalytic core consists of 2 alpha, 1 beta, 1 beta' and 1 omega subunit. When a sigma factor is associated with the core the holoenzyme is formed, which can initiate transcription.</text>
</comment>
<comment type="similarity">
    <text evidence="1">Belongs to the RNA polymerase subunit omega family.</text>
</comment>
<dbReference type="EC" id="2.7.7.6" evidence="1"/>
<dbReference type="EMBL" id="CP000020">
    <property type="protein sequence ID" value="AAW84600.1"/>
    <property type="molecule type" value="Genomic_DNA"/>
</dbReference>
<dbReference type="RefSeq" id="WP_005416998.1">
    <property type="nucleotide sequence ID" value="NZ_CAWLES010000001.1"/>
</dbReference>
<dbReference type="RefSeq" id="YP_203488.1">
    <property type="nucleotide sequence ID" value="NC_006840.2"/>
</dbReference>
<dbReference type="SMR" id="Q5E8P6"/>
<dbReference type="STRING" id="312309.VF_0105"/>
<dbReference type="EnsemblBacteria" id="AAW84600">
    <property type="protein sequence ID" value="AAW84600"/>
    <property type="gene ID" value="VF_0105"/>
</dbReference>
<dbReference type="GeneID" id="54162732"/>
<dbReference type="KEGG" id="vfi:VF_0105"/>
<dbReference type="PATRIC" id="fig|312309.11.peg.104"/>
<dbReference type="eggNOG" id="COG1758">
    <property type="taxonomic scope" value="Bacteria"/>
</dbReference>
<dbReference type="HOGENOM" id="CLU_125406_5_3_6"/>
<dbReference type="OrthoDB" id="9796300at2"/>
<dbReference type="Proteomes" id="UP000000537">
    <property type="component" value="Chromosome I"/>
</dbReference>
<dbReference type="GO" id="GO:0000428">
    <property type="term" value="C:DNA-directed RNA polymerase complex"/>
    <property type="evidence" value="ECO:0007669"/>
    <property type="project" value="UniProtKB-KW"/>
</dbReference>
<dbReference type="GO" id="GO:0003677">
    <property type="term" value="F:DNA binding"/>
    <property type="evidence" value="ECO:0007669"/>
    <property type="project" value="UniProtKB-UniRule"/>
</dbReference>
<dbReference type="GO" id="GO:0003899">
    <property type="term" value="F:DNA-directed RNA polymerase activity"/>
    <property type="evidence" value="ECO:0007669"/>
    <property type="project" value="UniProtKB-UniRule"/>
</dbReference>
<dbReference type="GO" id="GO:0006351">
    <property type="term" value="P:DNA-templated transcription"/>
    <property type="evidence" value="ECO:0007669"/>
    <property type="project" value="UniProtKB-UniRule"/>
</dbReference>
<dbReference type="FunFam" id="3.90.940.10:FF:000001">
    <property type="entry name" value="DNA-directed RNA polymerase subunit omega"/>
    <property type="match status" value="1"/>
</dbReference>
<dbReference type="Gene3D" id="3.90.940.10">
    <property type="match status" value="1"/>
</dbReference>
<dbReference type="HAMAP" id="MF_00366">
    <property type="entry name" value="RNApol_bact_RpoZ"/>
    <property type="match status" value="1"/>
</dbReference>
<dbReference type="InterPro" id="IPR003716">
    <property type="entry name" value="DNA-dir_RNA_pol_omega"/>
</dbReference>
<dbReference type="InterPro" id="IPR006110">
    <property type="entry name" value="Pol_omega/Rpo6/RPB6"/>
</dbReference>
<dbReference type="InterPro" id="IPR036161">
    <property type="entry name" value="RPB6/omega-like_sf"/>
</dbReference>
<dbReference type="NCBIfam" id="TIGR00690">
    <property type="entry name" value="rpoZ"/>
    <property type="match status" value="1"/>
</dbReference>
<dbReference type="PANTHER" id="PTHR34476">
    <property type="entry name" value="DNA-DIRECTED RNA POLYMERASE SUBUNIT OMEGA"/>
    <property type="match status" value="1"/>
</dbReference>
<dbReference type="PANTHER" id="PTHR34476:SF1">
    <property type="entry name" value="DNA-DIRECTED RNA POLYMERASE SUBUNIT OMEGA"/>
    <property type="match status" value="1"/>
</dbReference>
<dbReference type="Pfam" id="PF01192">
    <property type="entry name" value="RNA_pol_Rpb6"/>
    <property type="match status" value="1"/>
</dbReference>
<dbReference type="SMART" id="SM01409">
    <property type="entry name" value="RNA_pol_Rpb6"/>
    <property type="match status" value="1"/>
</dbReference>
<dbReference type="SUPFAM" id="SSF63562">
    <property type="entry name" value="RPB6/omega subunit-like"/>
    <property type="match status" value="1"/>
</dbReference>
<name>RPOZ_ALIF1</name>
<feature type="chain" id="PRO_0000237527" description="DNA-directed RNA polymerase subunit omega">
    <location>
        <begin position="1"/>
        <end position="90"/>
    </location>
</feature>
<feature type="region of interest" description="Disordered" evidence="2">
    <location>
        <begin position="69"/>
        <end position="90"/>
    </location>
</feature>
<sequence>MARVTVQDAVEKIGNRFDLVLISSRRARQMQTGGKDALVPEENDKTTVIALREIEEGLITKELLDARERQEQQEQDAAELAAVSSITHNR</sequence>